<dbReference type="EC" id="4.2.1.59" evidence="1"/>
<dbReference type="EMBL" id="CU928163">
    <property type="protein sequence ID" value="CAR11397.1"/>
    <property type="molecule type" value="Genomic_DNA"/>
</dbReference>
<dbReference type="RefSeq" id="WP_000210739.1">
    <property type="nucleotide sequence ID" value="NC_011751.1"/>
</dbReference>
<dbReference type="RefSeq" id="YP_002410953.1">
    <property type="nucleotide sequence ID" value="NC_011751.1"/>
</dbReference>
<dbReference type="SMR" id="B7N847"/>
<dbReference type="STRING" id="585056.ECUMN_0177"/>
<dbReference type="GeneID" id="93777245"/>
<dbReference type="KEGG" id="eum:ECUMN_0177"/>
<dbReference type="PATRIC" id="fig|585056.7.peg.371"/>
<dbReference type="HOGENOM" id="CLU_078912_1_0_6"/>
<dbReference type="Proteomes" id="UP000007097">
    <property type="component" value="Chromosome"/>
</dbReference>
<dbReference type="GO" id="GO:0005737">
    <property type="term" value="C:cytoplasm"/>
    <property type="evidence" value="ECO:0007669"/>
    <property type="project" value="UniProtKB-SubCell"/>
</dbReference>
<dbReference type="GO" id="GO:0016020">
    <property type="term" value="C:membrane"/>
    <property type="evidence" value="ECO:0007669"/>
    <property type="project" value="GOC"/>
</dbReference>
<dbReference type="GO" id="GO:0019171">
    <property type="term" value="F:(3R)-hydroxyacyl-[acyl-carrier-protein] dehydratase activity"/>
    <property type="evidence" value="ECO:0007669"/>
    <property type="project" value="UniProtKB-EC"/>
</dbReference>
<dbReference type="GO" id="GO:0006633">
    <property type="term" value="P:fatty acid biosynthetic process"/>
    <property type="evidence" value="ECO:0007669"/>
    <property type="project" value="UniProtKB-UniRule"/>
</dbReference>
<dbReference type="GO" id="GO:0009245">
    <property type="term" value="P:lipid A biosynthetic process"/>
    <property type="evidence" value="ECO:0007669"/>
    <property type="project" value="UniProtKB-UniRule"/>
</dbReference>
<dbReference type="CDD" id="cd01288">
    <property type="entry name" value="FabZ"/>
    <property type="match status" value="1"/>
</dbReference>
<dbReference type="FunFam" id="3.10.129.10:FF:000001">
    <property type="entry name" value="3-hydroxyacyl-[acyl-carrier-protein] dehydratase FabZ"/>
    <property type="match status" value="1"/>
</dbReference>
<dbReference type="Gene3D" id="3.10.129.10">
    <property type="entry name" value="Hotdog Thioesterase"/>
    <property type="match status" value="1"/>
</dbReference>
<dbReference type="HAMAP" id="MF_00406">
    <property type="entry name" value="FabZ"/>
    <property type="match status" value="1"/>
</dbReference>
<dbReference type="InterPro" id="IPR013114">
    <property type="entry name" value="FabA_FabZ"/>
</dbReference>
<dbReference type="InterPro" id="IPR010084">
    <property type="entry name" value="FabZ"/>
</dbReference>
<dbReference type="InterPro" id="IPR029069">
    <property type="entry name" value="HotDog_dom_sf"/>
</dbReference>
<dbReference type="NCBIfam" id="TIGR01750">
    <property type="entry name" value="fabZ"/>
    <property type="match status" value="1"/>
</dbReference>
<dbReference type="NCBIfam" id="NF000582">
    <property type="entry name" value="PRK00006.1"/>
    <property type="match status" value="1"/>
</dbReference>
<dbReference type="PANTHER" id="PTHR30272">
    <property type="entry name" value="3-HYDROXYACYL-[ACYL-CARRIER-PROTEIN] DEHYDRATASE"/>
    <property type="match status" value="1"/>
</dbReference>
<dbReference type="PANTHER" id="PTHR30272:SF1">
    <property type="entry name" value="3-HYDROXYACYL-[ACYL-CARRIER-PROTEIN] DEHYDRATASE"/>
    <property type="match status" value="1"/>
</dbReference>
<dbReference type="Pfam" id="PF07977">
    <property type="entry name" value="FabA"/>
    <property type="match status" value="1"/>
</dbReference>
<dbReference type="SUPFAM" id="SSF54637">
    <property type="entry name" value="Thioesterase/thiol ester dehydrase-isomerase"/>
    <property type="match status" value="1"/>
</dbReference>
<gene>
    <name evidence="1" type="primary">fabZ</name>
    <name type="ordered locus">ECUMN_0177</name>
</gene>
<proteinExistence type="inferred from homology"/>
<evidence type="ECO:0000255" key="1">
    <source>
        <dbReference type="HAMAP-Rule" id="MF_00406"/>
    </source>
</evidence>
<name>FABZ_ECOLU</name>
<accession>B7N847</accession>
<organism>
    <name type="scientific">Escherichia coli O17:K52:H18 (strain UMN026 / ExPEC)</name>
    <dbReference type="NCBI Taxonomy" id="585056"/>
    <lineage>
        <taxon>Bacteria</taxon>
        <taxon>Pseudomonadati</taxon>
        <taxon>Pseudomonadota</taxon>
        <taxon>Gammaproteobacteria</taxon>
        <taxon>Enterobacterales</taxon>
        <taxon>Enterobacteriaceae</taxon>
        <taxon>Escherichia</taxon>
    </lineage>
</organism>
<reference key="1">
    <citation type="journal article" date="2009" name="PLoS Genet.">
        <title>Organised genome dynamics in the Escherichia coli species results in highly diverse adaptive paths.</title>
        <authorList>
            <person name="Touchon M."/>
            <person name="Hoede C."/>
            <person name="Tenaillon O."/>
            <person name="Barbe V."/>
            <person name="Baeriswyl S."/>
            <person name="Bidet P."/>
            <person name="Bingen E."/>
            <person name="Bonacorsi S."/>
            <person name="Bouchier C."/>
            <person name="Bouvet O."/>
            <person name="Calteau A."/>
            <person name="Chiapello H."/>
            <person name="Clermont O."/>
            <person name="Cruveiller S."/>
            <person name="Danchin A."/>
            <person name="Diard M."/>
            <person name="Dossat C."/>
            <person name="Karoui M.E."/>
            <person name="Frapy E."/>
            <person name="Garry L."/>
            <person name="Ghigo J.M."/>
            <person name="Gilles A.M."/>
            <person name="Johnson J."/>
            <person name="Le Bouguenec C."/>
            <person name="Lescat M."/>
            <person name="Mangenot S."/>
            <person name="Martinez-Jehanne V."/>
            <person name="Matic I."/>
            <person name="Nassif X."/>
            <person name="Oztas S."/>
            <person name="Petit M.A."/>
            <person name="Pichon C."/>
            <person name="Rouy Z."/>
            <person name="Ruf C.S."/>
            <person name="Schneider D."/>
            <person name="Tourret J."/>
            <person name="Vacherie B."/>
            <person name="Vallenet D."/>
            <person name="Medigue C."/>
            <person name="Rocha E.P.C."/>
            <person name="Denamur E."/>
        </authorList>
    </citation>
    <scope>NUCLEOTIDE SEQUENCE [LARGE SCALE GENOMIC DNA]</scope>
    <source>
        <strain>UMN026 / ExPEC</strain>
    </source>
</reference>
<comment type="function">
    <text evidence="1">Involved in unsaturated fatty acids biosynthesis. Catalyzes the dehydration of short chain beta-hydroxyacyl-ACPs and long chain saturated and unsaturated beta-hydroxyacyl-ACPs.</text>
</comment>
<comment type="catalytic activity">
    <reaction evidence="1">
        <text>a (3R)-hydroxyacyl-[ACP] = a (2E)-enoyl-[ACP] + H2O</text>
        <dbReference type="Rhea" id="RHEA:13097"/>
        <dbReference type="Rhea" id="RHEA-COMP:9925"/>
        <dbReference type="Rhea" id="RHEA-COMP:9945"/>
        <dbReference type="ChEBI" id="CHEBI:15377"/>
        <dbReference type="ChEBI" id="CHEBI:78784"/>
        <dbReference type="ChEBI" id="CHEBI:78827"/>
        <dbReference type="EC" id="4.2.1.59"/>
    </reaction>
</comment>
<comment type="subunit">
    <text evidence="1">Oligomer.</text>
</comment>
<comment type="subcellular location">
    <subcellularLocation>
        <location evidence="1">Cytoplasm</location>
    </subcellularLocation>
</comment>
<comment type="PTM">
    <text evidence="1">The N-terminus is blocked.</text>
</comment>
<comment type="similarity">
    <text evidence="1">Belongs to the thioester dehydratase family. FabZ subfamily.</text>
</comment>
<protein>
    <recommendedName>
        <fullName evidence="1">3-hydroxyacyl-[acyl-carrier-protein] dehydratase FabZ</fullName>
        <ecNumber evidence="1">4.2.1.59</ecNumber>
    </recommendedName>
    <alternativeName>
        <fullName evidence="1">(3R)-hydroxymyristoyl-[acyl-carrier-protein] dehydratase</fullName>
        <shortName evidence="1">(3R)-hydroxymyristoyl-ACP dehydrase</shortName>
    </alternativeName>
    <alternativeName>
        <fullName evidence="1">Beta-hydroxyacyl-ACP dehydratase</fullName>
    </alternativeName>
</protein>
<feature type="chain" id="PRO_1000197300" description="3-hydroxyacyl-[acyl-carrier-protein] dehydratase FabZ">
    <location>
        <begin position="1"/>
        <end position="151"/>
    </location>
</feature>
<feature type="active site" evidence="1">
    <location>
        <position position="54"/>
    </location>
</feature>
<keyword id="KW-0963">Cytoplasm</keyword>
<keyword id="KW-0441">Lipid A biosynthesis</keyword>
<keyword id="KW-0444">Lipid biosynthesis</keyword>
<keyword id="KW-0443">Lipid metabolism</keyword>
<keyword id="KW-0456">Lyase</keyword>
<sequence>MTTNTHTLQIEEILELLPHRFPFLLVDRVLDFEEGRFLRAVKNVSVNEPFFQGHFPGKPIFPGVLILEAMAQATGILAFKSVGKLEPGELYYFAGIDEARFKRPVVPGDQMIMEVTFEKTRRGLTRFKGVALVDGKVVCEATMMCARSREA</sequence>